<feature type="chain" id="PRO_0000395530" description="Peptide methionine sulfoxide reductase B5">
    <location>
        <begin position="1"/>
        <end position="136"/>
    </location>
</feature>
<feature type="domain" description="MsrB" evidence="2">
    <location>
        <begin position="14"/>
        <end position="135"/>
    </location>
</feature>
<feature type="active site" description="Nucleophile" evidence="2">
    <location>
        <position position="124"/>
    </location>
</feature>
<feature type="binding site" evidence="2">
    <location>
        <position position="53"/>
    </location>
    <ligand>
        <name>Zn(2+)</name>
        <dbReference type="ChEBI" id="CHEBI:29105"/>
    </ligand>
</feature>
<feature type="binding site" evidence="2">
    <location>
        <position position="56"/>
    </location>
    <ligand>
        <name>Zn(2+)</name>
        <dbReference type="ChEBI" id="CHEBI:29105"/>
    </ligand>
</feature>
<feature type="binding site" evidence="2">
    <location>
        <position position="99"/>
    </location>
    <ligand>
        <name>Zn(2+)</name>
        <dbReference type="ChEBI" id="CHEBI:29105"/>
    </ligand>
</feature>
<feature type="binding site" evidence="2">
    <location>
        <position position="102"/>
    </location>
    <ligand>
        <name>Zn(2+)</name>
        <dbReference type="ChEBI" id="CHEBI:29105"/>
    </ligand>
</feature>
<feature type="disulfide bond" description="Redox-active" evidence="1">
    <location>
        <begin position="71"/>
        <end position="124"/>
    </location>
</feature>
<evidence type="ECO:0000250" key="1"/>
<evidence type="ECO:0000255" key="2">
    <source>
        <dbReference type="PROSITE-ProRule" id="PRU01126"/>
    </source>
</evidence>
<evidence type="ECO:0000305" key="3"/>
<protein>
    <recommendedName>
        <fullName>Peptide methionine sulfoxide reductase B5</fullName>
        <shortName>OsMSRB5</shortName>
        <ecNumber>1.8.4.12</ecNumber>
    </recommendedName>
    <alternativeName>
        <fullName>Peptide-methionine (R)-S-oxide reductase</fullName>
    </alternativeName>
</protein>
<comment type="function">
    <text evidence="1">Catalyzes the reduction of methionine sulfoxide (MetSO) to methionine in proteins. Plays a protective role against oxidative stress by restoring activity to proteins that have been inactivated by methionine oxidation. MSRB family specifically reduces the MetSO R-enantiomer (By similarity).</text>
</comment>
<comment type="catalytic activity">
    <reaction>
        <text>L-methionyl-[protein] + [thioredoxin]-disulfide + H2O = L-methionyl-(R)-S-oxide-[protein] + [thioredoxin]-dithiol</text>
        <dbReference type="Rhea" id="RHEA:24164"/>
        <dbReference type="Rhea" id="RHEA-COMP:10698"/>
        <dbReference type="Rhea" id="RHEA-COMP:10700"/>
        <dbReference type="Rhea" id="RHEA-COMP:12313"/>
        <dbReference type="Rhea" id="RHEA-COMP:12314"/>
        <dbReference type="ChEBI" id="CHEBI:15377"/>
        <dbReference type="ChEBI" id="CHEBI:16044"/>
        <dbReference type="ChEBI" id="CHEBI:29950"/>
        <dbReference type="ChEBI" id="CHEBI:45764"/>
        <dbReference type="ChEBI" id="CHEBI:50058"/>
        <dbReference type="EC" id="1.8.4.12"/>
    </reaction>
</comment>
<comment type="cofactor">
    <cofactor evidence="1">
        <name>Zn(2+)</name>
        <dbReference type="ChEBI" id="CHEBI:29105"/>
    </cofactor>
    <text evidence="1">Binds 1 zinc ion per subunit.</text>
</comment>
<comment type="subcellular location">
    <subcellularLocation>
        <location evidence="3">Cytoplasm</location>
        <location evidence="3">Cytosol</location>
    </subcellularLocation>
</comment>
<comment type="similarity">
    <text evidence="3">Belongs to the MsrB Met sulfoxide reductase family.</text>
</comment>
<comment type="sequence caution" evidence="3">
    <conflict type="erroneous initiation">
        <sequence resource="EMBL-CDS" id="AAO72582"/>
    </conflict>
    <text>Extended N-terminus.</text>
</comment>
<sequence>MASSGDSSGKQRSDEEWRAVLSPEQFRILRLKGTELPGTGEYNKFYGDGVYNCAGCGTPLYKSTTKFDSGCGWPAFFEGLPGAINRTPDPDGRRVEITCAACGGHLGHVFKGEGFKTPTDERHCVNSVSIKFTPAS</sequence>
<accession>Q10L32</accession>
<accession>A0A0P0VXQ1</accession>
<accession>Q84PA1</accession>
<dbReference type="EC" id="1.8.4.12"/>
<dbReference type="EMBL" id="AY224463">
    <property type="protein sequence ID" value="AAO72582.1"/>
    <property type="status" value="ALT_INIT"/>
    <property type="molecule type" value="mRNA"/>
</dbReference>
<dbReference type="EMBL" id="DP000009">
    <property type="protein sequence ID" value="ABF96078.1"/>
    <property type="molecule type" value="Genomic_DNA"/>
</dbReference>
<dbReference type="EMBL" id="AP008209">
    <property type="protein sequence ID" value="BAF12070.1"/>
    <property type="molecule type" value="Genomic_DNA"/>
</dbReference>
<dbReference type="EMBL" id="AP014959">
    <property type="protein sequence ID" value="BAS84283.1"/>
    <property type="molecule type" value="Genomic_DNA"/>
</dbReference>
<dbReference type="EMBL" id="CM000140">
    <property type="protein sequence ID" value="EAZ26998.1"/>
    <property type="molecule type" value="Genomic_DNA"/>
</dbReference>
<dbReference type="EMBL" id="AK068764">
    <property type="protein sequence ID" value="BAG91076.1"/>
    <property type="molecule type" value="mRNA"/>
</dbReference>
<dbReference type="EMBL" id="AK109429">
    <property type="protein sequence ID" value="BAG98742.1"/>
    <property type="molecule type" value="mRNA"/>
</dbReference>
<dbReference type="RefSeq" id="XP_015633089.1">
    <property type="nucleotide sequence ID" value="XM_015777603.1"/>
</dbReference>
<dbReference type="SMR" id="Q10L32"/>
<dbReference type="FunCoup" id="Q10L32">
    <property type="interactions" value="1106"/>
</dbReference>
<dbReference type="IntAct" id="Q10L32">
    <property type="interactions" value="1"/>
</dbReference>
<dbReference type="STRING" id="39947.Q10L32"/>
<dbReference type="PaxDb" id="39947-Q10L32"/>
<dbReference type="EnsemblPlants" id="Os03t0360700-01">
    <property type="protein sequence ID" value="Os03t0360700-01"/>
    <property type="gene ID" value="Os03g0360700"/>
</dbReference>
<dbReference type="Gramene" id="Os03t0360700-01">
    <property type="protein sequence ID" value="Os03t0360700-01"/>
    <property type="gene ID" value="Os03g0360700"/>
</dbReference>
<dbReference type="KEGG" id="dosa:Os03g0360700"/>
<dbReference type="eggNOG" id="KOG0856">
    <property type="taxonomic scope" value="Eukaryota"/>
</dbReference>
<dbReference type="HOGENOM" id="CLU_031040_8_1_1"/>
<dbReference type="InParanoid" id="Q10L32"/>
<dbReference type="OMA" id="AKTDAQW"/>
<dbReference type="OrthoDB" id="44061at2759"/>
<dbReference type="Proteomes" id="UP000000763">
    <property type="component" value="Chromosome 3"/>
</dbReference>
<dbReference type="Proteomes" id="UP000007752">
    <property type="component" value="Chromosome 3"/>
</dbReference>
<dbReference type="Proteomes" id="UP000059680">
    <property type="component" value="Chromosome 3"/>
</dbReference>
<dbReference type="GO" id="GO:0005737">
    <property type="term" value="C:cytoplasm"/>
    <property type="evidence" value="ECO:0000318"/>
    <property type="project" value="GO_Central"/>
</dbReference>
<dbReference type="GO" id="GO:0005829">
    <property type="term" value="C:cytosol"/>
    <property type="evidence" value="ECO:0007669"/>
    <property type="project" value="UniProtKB-SubCell"/>
</dbReference>
<dbReference type="GO" id="GO:0046872">
    <property type="term" value="F:metal ion binding"/>
    <property type="evidence" value="ECO:0007669"/>
    <property type="project" value="UniProtKB-KW"/>
</dbReference>
<dbReference type="GO" id="GO:0033743">
    <property type="term" value="F:peptide-methionine (R)-S-oxide reductase activity"/>
    <property type="evidence" value="ECO:0000318"/>
    <property type="project" value="GO_Central"/>
</dbReference>
<dbReference type="GO" id="GO:0034599">
    <property type="term" value="P:cellular response to oxidative stress"/>
    <property type="evidence" value="ECO:0000318"/>
    <property type="project" value="GO_Central"/>
</dbReference>
<dbReference type="GO" id="GO:0030091">
    <property type="term" value="P:protein repair"/>
    <property type="evidence" value="ECO:0007669"/>
    <property type="project" value="InterPro"/>
</dbReference>
<dbReference type="FunFam" id="2.170.150.20:FF:000009">
    <property type="entry name" value="Peptide-methionine (R)-S-oxide reductase"/>
    <property type="match status" value="1"/>
</dbReference>
<dbReference type="Gene3D" id="2.170.150.20">
    <property type="entry name" value="Peptide methionine sulfoxide reductase"/>
    <property type="match status" value="1"/>
</dbReference>
<dbReference type="InterPro" id="IPR028427">
    <property type="entry name" value="Met_Sox_Rdtase_MsrB"/>
</dbReference>
<dbReference type="InterPro" id="IPR002579">
    <property type="entry name" value="Met_Sox_Rdtase_MsrB_dom"/>
</dbReference>
<dbReference type="InterPro" id="IPR011057">
    <property type="entry name" value="Mss4-like_sf"/>
</dbReference>
<dbReference type="NCBIfam" id="TIGR00357">
    <property type="entry name" value="peptide-methionine (R)-S-oxide reductase MsrB"/>
    <property type="match status" value="1"/>
</dbReference>
<dbReference type="PANTHER" id="PTHR46081">
    <property type="entry name" value="PEPTIDE METHIONINE SULFOXIDE REDUCTASE 2"/>
    <property type="match status" value="1"/>
</dbReference>
<dbReference type="PANTHER" id="PTHR46081:SF4">
    <property type="entry name" value="PEPTIDE METHIONINE SULFOXIDE REDUCTASE B5"/>
    <property type="match status" value="1"/>
</dbReference>
<dbReference type="Pfam" id="PF01641">
    <property type="entry name" value="SelR"/>
    <property type="match status" value="1"/>
</dbReference>
<dbReference type="SUPFAM" id="SSF51316">
    <property type="entry name" value="Mss4-like"/>
    <property type="match status" value="1"/>
</dbReference>
<dbReference type="PROSITE" id="PS51790">
    <property type="entry name" value="MSRB"/>
    <property type="match status" value="1"/>
</dbReference>
<organism>
    <name type="scientific">Oryza sativa subsp. japonica</name>
    <name type="common">Rice</name>
    <dbReference type="NCBI Taxonomy" id="39947"/>
    <lineage>
        <taxon>Eukaryota</taxon>
        <taxon>Viridiplantae</taxon>
        <taxon>Streptophyta</taxon>
        <taxon>Embryophyta</taxon>
        <taxon>Tracheophyta</taxon>
        <taxon>Spermatophyta</taxon>
        <taxon>Magnoliopsida</taxon>
        <taxon>Liliopsida</taxon>
        <taxon>Poales</taxon>
        <taxon>Poaceae</taxon>
        <taxon>BOP clade</taxon>
        <taxon>Oryzoideae</taxon>
        <taxon>Oryzeae</taxon>
        <taxon>Oryzinae</taxon>
        <taxon>Oryza</taxon>
        <taxon>Oryza sativa</taxon>
    </lineage>
</organism>
<gene>
    <name type="primary">MSRB5</name>
    <name type="ordered locus">Os03g0360700</name>
    <name type="ordered locus">LOC_Os03g24600</name>
    <name type="ORF">OsJ_10923</name>
</gene>
<keyword id="KW-0963">Cytoplasm</keyword>
<keyword id="KW-1015">Disulfide bond</keyword>
<keyword id="KW-0249">Electron transport</keyword>
<keyword id="KW-0479">Metal-binding</keyword>
<keyword id="KW-0560">Oxidoreductase</keyword>
<keyword id="KW-0676">Redox-active center</keyword>
<keyword id="KW-1185">Reference proteome</keyword>
<keyword id="KW-0813">Transport</keyword>
<keyword id="KW-0862">Zinc</keyword>
<name>MSRB5_ORYSJ</name>
<proteinExistence type="evidence at transcript level"/>
<reference key="1">
    <citation type="journal article" date="2003" name="Proc. Natl. Acad. Sci. U.S.A.">
        <title>A network of rice genes associated with stress response and seed development.</title>
        <authorList>
            <person name="Cooper B."/>
            <person name="Clarke J.D."/>
            <person name="Budworth P."/>
            <person name="Kreps J."/>
            <person name="Hutchison D."/>
            <person name="Park S."/>
            <person name="Guimil S."/>
            <person name="Dunn M."/>
            <person name="Luginbuehl P."/>
            <person name="Ellero C."/>
            <person name="Goff S.A."/>
            <person name="Glazebrook J."/>
        </authorList>
    </citation>
    <scope>NUCLEOTIDE SEQUENCE [MRNA]</scope>
    <source>
        <strain>cv. Nipponbare</strain>
    </source>
</reference>
<reference key="2">
    <citation type="journal article" date="2005" name="Genome Res.">
        <title>Sequence, annotation, and analysis of synteny between rice chromosome 3 and diverged grass species.</title>
        <authorList>
            <consortium name="The rice chromosome 3 sequencing consortium"/>
            <person name="Buell C.R."/>
            <person name="Yuan Q."/>
            <person name="Ouyang S."/>
            <person name="Liu J."/>
            <person name="Zhu W."/>
            <person name="Wang A."/>
            <person name="Maiti R."/>
            <person name="Haas B."/>
            <person name="Wortman J."/>
            <person name="Pertea M."/>
            <person name="Jones K.M."/>
            <person name="Kim M."/>
            <person name="Overton L."/>
            <person name="Tsitrin T."/>
            <person name="Fadrosh D."/>
            <person name="Bera J."/>
            <person name="Weaver B."/>
            <person name="Jin S."/>
            <person name="Johri S."/>
            <person name="Reardon M."/>
            <person name="Webb K."/>
            <person name="Hill J."/>
            <person name="Moffat K."/>
            <person name="Tallon L."/>
            <person name="Van Aken S."/>
            <person name="Lewis M."/>
            <person name="Utterback T."/>
            <person name="Feldblyum T."/>
            <person name="Zismann V."/>
            <person name="Iobst S."/>
            <person name="Hsiao J."/>
            <person name="de Vazeille A.R."/>
            <person name="Salzberg S.L."/>
            <person name="White O."/>
            <person name="Fraser C.M."/>
            <person name="Yu Y."/>
            <person name="Kim H."/>
            <person name="Rambo T."/>
            <person name="Currie J."/>
            <person name="Collura K."/>
            <person name="Kernodle-Thompson S."/>
            <person name="Wei F."/>
            <person name="Kudrna K."/>
            <person name="Ammiraju J.S.S."/>
            <person name="Luo M."/>
            <person name="Goicoechea J.L."/>
            <person name="Wing R.A."/>
            <person name="Henry D."/>
            <person name="Oates R."/>
            <person name="Palmer M."/>
            <person name="Pries G."/>
            <person name="Saski C."/>
            <person name="Simmons J."/>
            <person name="Soderlund C."/>
            <person name="Nelson W."/>
            <person name="de la Bastide M."/>
            <person name="Spiegel L."/>
            <person name="Nascimento L."/>
            <person name="Huang E."/>
            <person name="Preston R."/>
            <person name="Zutavern T."/>
            <person name="Palmer L."/>
            <person name="O'Shaughnessy A."/>
            <person name="Dike S."/>
            <person name="McCombie W.R."/>
            <person name="Minx P."/>
            <person name="Cordum H."/>
            <person name="Wilson R."/>
            <person name="Jin W."/>
            <person name="Lee H.R."/>
            <person name="Jiang J."/>
            <person name="Jackson S."/>
        </authorList>
    </citation>
    <scope>NUCLEOTIDE SEQUENCE [LARGE SCALE GENOMIC DNA]</scope>
    <source>
        <strain>cv. Nipponbare</strain>
    </source>
</reference>
<reference key="3">
    <citation type="journal article" date="2005" name="Nature">
        <title>The map-based sequence of the rice genome.</title>
        <authorList>
            <consortium name="International rice genome sequencing project (IRGSP)"/>
        </authorList>
    </citation>
    <scope>NUCLEOTIDE SEQUENCE [LARGE SCALE GENOMIC DNA]</scope>
    <source>
        <strain>cv. Nipponbare</strain>
    </source>
</reference>
<reference key="4">
    <citation type="journal article" date="2008" name="Nucleic Acids Res.">
        <title>The rice annotation project database (RAP-DB): 2008 update.</title>
        <authorList>
            <consortium name="The rice annotation project (RAP)"/>
        </authorList>
    </citation>
    <scope>GENOME REANNOTATION</scope>
    <source>
        <strain>cv. Nipponbare</strain>
    </source>
</reference>
<reference key="5">
    <citation type="journal article" date="2013" name="Rice">
        <title>Improvement of the Oryza sativa Nipponbare reference genome using next generation sequence and optical map data.</title>
        <authorList>
            <person name="Kawahara Y."/>
            <person name="de la Bastide M."/>
            <person name="Hamilton J.P."/>
            <person name="Kanamori H."/>
            <person name="McCombie W.R."/>
            <person name="Ouyang S."/>
            <person name="Schwartz D.C."/>
            <person name="Tanaka T."/>
            <person name="Wu J."/>
            <person name="Zhou S."/>
            <person name="Childs K.L."/>
            <person name="Davidson R.M."/>
            <person name="Lin H."/>
            <person name="Quesada-Ocampo L."/>
            <person name="Vaillancourt B."/>
            <person name="Sakai H."/>
            <person name="Lee S.S."/>
            <person name="Kim J."/>
            <person name="Numa H."/>
            <person name="Itoh T."/>
            <person name="Buell C.R."/>
            <person name="Matsumoto T."/>
        </authorList>
    </citation>
    <scope>GENOME REANNOTATION</scope>
    <source>
        <strain>cv. Nipponbare</strain>
    </source>
</reference>
<reference key="6">
    <citation type="journal article" date="2005" name="PLoS Biol.">
        <title>The genomes of Oryza sativa: a history of duplications.</title>
        <authorList>
            <person name="Yu J."/>
            <person name="Wang J."/>
            <person name="Lin W."/>
            <person name="Li S."/>
            <person name="Li H."/>
            <person name="Zhou J."/>
            <person name="Ni P."/>
            <person name="Dong W."/>
            <person name="Hu S."/>
            <person name="Zeng C."/>
            <person name="Zhang J."/>
            <person name="Zhang Y."/>
            <person name="Li R."/>
            <person name="Xu Z."/>
            <person name="Li S."/>
            <person name="Li X."/>
            <person name="Zheng H."/>
            <person name="Cong L."/>
            <person name="Lin L."/>
            <person name="Yin J."/>
            <person name="Geng J."/>
            <person name="Li G."/>
            <person name="Shi J."/>
            <person name="Liu J."/>
            <person name="Lv H."/>
            <person name="Li J."/>
            <person name="Wang J."/>
            <person name="Deng Y."/>
            <person name="Ran L."/>
            <person name="Shi X."/>
            <person name="Wang X."/>
            <person name="Wu Q."/>
            <person name="Li C."/>
            <person name="Ren X."/>
            <person name="Wang J."/>
            <person name="Wang X."/>
            <person name="Li D."/>
            <person name="Liu D."/>
            <person name="Zhang X."/>
            <person name="Ji Z."/>
            <person name="Zhao W."/>
            <person name="Sun Y."/>
            <person name="Zhang Z."/>
            <person name="Bao J."/>
            <person name="Han Y."/>
            <person name="Dong L."/>
            <person name="Ji J."/>
            <person name="Chen P."/>
            <person name="Wu S."/>
            <person name="Liu J."/>
            <person name="Xiao Y."/>
            <person name="Bu D."/>
            <person name="Tan J."/>
            <person name="Yang L."/>
            <person name="Ye C."/>
            <person name="Zhang J."/>
            <person name="Xu J."/>
            <person name="Zhou Y."/>
            <person name="Yu Y."/>
            <person name="Zhang B."/>
            <person name="Zhuang S."/>
            <person name="Wei H."/>
            <person name="Liu B."/>
            <person name="Lei M."/>
            <person name="Yu H."/>
            <person name="Li Y."/>
            <person name="Xu H."/>
            <person name="Wei S."/>
            <person name="He X."/>
            <person name="Fang L."/>
            <person name="Zhang Z."/>
            <person name="Zhang Y."/>
            <person name="Huang X."/>
            <person name="Su Z."/>
            <person name="Tong W."/>
            <person name="Li J."/>
            <person name="Tong Z."/>
            <person name="Li S."/>
            <person name="Ye J."/>
            <person name="Wang L."/>
            <person name="Fang L."/>
            <person name="Lei T."/>
            <person name="Chen C.-S."/>
            <person name="Chen H.-C."/>
            <person name="Xu Z."/>
            <person name="Li H."/>
            <person name="Huang H."/>
            <person name="Zhang F."/>
            <person name="Xu H."/>
            <person name="Li N."/>
            <person name="Zhao C."/>
            <person name="Li S."/>
            <person name="Dong L."/>
            <person name="Huang Y."/>
            <person name="Li L."/>
            <person name="Xi Y."/>
            <person name="Qi Q."/>
            <person name="Li W."/>
            <person name="Zhang B."/>
            <person name="Hu W."/>
            <person name="Zhang Y."/>
            <person name="Tian X."/>
            <person name="Jiao Y."/>
            <person name="Liang X."/>
            <person name="Jin J."/>
            <person name="Gao L."/>
            <person name="Zheng W."/>
            <person name="Hao B."/>
            <person name="Liu S.-M."/>
            <person name="Wang W."/>
            <person name="Yuan L."/>
            <person name="Cao M."/>
            <person name="McDermott J."/>
            <person name="Samudrala R."/>
            <person name="Wang J."/>
            <person name="Wong G.K.-S."/>
            <person name="Yang H."/>
        </authorList>
    </citation>
    <scope>NUCLEOTIDE SEQUENCE [LARGE SCALE GENOMIC DNA]</scope>
    <source>
        <strain>cv. Nipponbare</strain>
    </source>
</reference>
<reference key="7">
    <citation type="journal article" date="2003" name="Science">
        <title>Collection, mapping, and annotation of over 28,000 cDNA clones from japonica rice.</title>
        <authorList>
            <consortium name="The rice full-length cDNA consortium"/>
        </authorList>
    </citation>
    <scope>NUCLEOTIDE SEQUENCE [LARGE SCALE MRNA]</scope>
    <source>
        <strain>cv. Nipponbare</strain>
    </source>
</reference>
<reference key="8">
    <citation type="journal article" date="2006" name="Photosyn. Res.">
        <title>Plant methionine sulfoxide reductase A and B multigenic families.</title>
        <authorList>
            <person name="Rouhier N."/>
            <person name="Vieira Dos Santos C."/>
            <person name="Tarrago L."/>
            <person name="Rey P."/>
        </authorList>
    </citation>
    <scope>GENE FAMILY</scope>
    <scope>NOMENCLATURE</scope>
</reference>